<name>SYN_THEAC</name>
<evidence type="ECO:0000255" key="1">
    <source>
        <dbReference type="HAMAP-Rule" id="MF_00534"/>
    </source>
</evidence>
<keyword id="KW-0030">Aminoacyl-tRNA synthetase</keyword>
<keyword id="KW-0067">ATP-binding</keyword>
<keyword id="KW-0963">Cytoplasm</keyword>
<keyword id="KW-0436">Ligase</keyword>
<keyword id="KW-0547">Nucleotide-binding</keyword>
<keyword id="KW-0648">Protein biosynthesis</keyword>
<keyword id="KW-1185">Reference proteome</keyword>
<organism>
    <name type="scientific">Thermoplasma acidophilum (strain ATCC 25905 / DSM 1728 / JCM 9062 / NBRC 15155 / AMRC-C165)</name>
    <dbReference type="NCBI Taxonomy" id="273075"/>
    <lineage>
        <taxon>Archaea</taxon>
        <taxon>Methanobacteriati</taxon>
        <taxon>Thermoplasmatota</taxon>
        <taxon>Thermoplasmata</taxon>
        <taxon>Thermoplasmatales</taxon>
        <taxon>Thermoplasmataceae</taxon>
        <taxon>Thermoplasma</taxon>
    </lineage>
</organism>
<dbReference type="EC" id="6.1.1.22" evidence="1"/>
<dbReference type="EMBL" id="AL445064">
    <property type="protein sequence ID" value="CAC11659.1"/>
    <property type="molecule type" value="Genomic_DNA"/>
</dbReference>
<dbReference type="RefSeq" id="WP_010900944.1">
    <property type="nucleotide sequence ID" value="NC_002578.1"/>
</dbReference>
<dbReference type="SMR" id="Q9HKS7"/>
<dbReference type="STRING" id="273075.gene:9571737"/>
<dbReference type="PaxDb" id="273075-Ta0519"/>
<dbReference type="EnsemblBacteria" id="CAC11659">
    <property type="protein sequence ID" value="CAC11659"/>
    <property type="gene ID" value="CAC11659"/>
</dbReference>
<dbReference type="KEGG" id="tac:Ta0519"/>
<dbReference type="eggNOG" id="arCOG00407">
    <property type="taxonomic scope" value="Archaea"/>
</dbReference>
<dbReference type="HOGENOM" id="CLU_004553_2_0_2"/>
<dbReference type="InParanoid" id="Q9HKS7"/>
<dbReference type="OrthoDB" id="5908at2157"/>
<dbReference type="Proteomes" id="UP000001024">
    <property type="component" value="Chromosome"/>
</dbReference>
<dbReference type="GO" id="GO:0005737">
    <property type="term" value="C:cytoplasm"/>
    <property type="evidence" value="ECO:0007669"/>
    <property type="project" value="UniProtKB-SubCell"/>
</dbReference>
<dbReference type="GO" id="GO:0004816">
    <property type="term" value="F:asparagine-tRNA ligase activity"/>
    <property type="evidence" value="ECO:0007669"/>
    <property type="project" value="UniProtKB-UniRule"/>
</dbReference>
<dbReference type="GO" id="GO:0005524">
    <property type="term" value="F:ATP binding"/>
    <property type="evidence" value="ECO:0007669"/>
    <property type="project" value="UniProtKB-UniRule"/>
</dbReference>
<dbReference type="GO" id="GO:0003676">
    <property type="term" value="F:nucleic acid binding"/>
    <property type="evidence" value="ECO:0007669"/>
    <property type="project" value="InterPro"/>
</dbReference>
<dbReference type="GO" id="GO:0006421">
    <property type="term" value="P:asparaginyl-tRNA aminoacylation"/>
    <property type="evidence" value="ECO:0007669"/>
    <property type="project" value="UniProtKB-UniRule"/>
</dbReference>
<dbReference type="CDD" id="cd04323">
    <property type="entry name" value="AsnRS_cyto_like_N"/>
    <property type="match status" value="1"/>
</dbReference>
<dbReference type="CDD" id="cd00776">
    <property type="entry name" value="AsxRS_core"/>
    <property type="match status" value="1"/>
</dbReference>
<dbReference type="Gene3D" id="3.30.930.10">
    <property type="entry name" value="Bira Bifunctional Protein, Domain 2"/>
    <property type="match status" value="1"/>
</dbReference>
<dbReference type="Gene3D" id="2.40.50.140">
    <property type="entry name" value="Nucleic acid-binding proteins"/>
    <property type="match status" value="1"/>
</dbReference>
<dbReference type="HAMAP" id="MF_00534">
    <property type="entry name" value="Asn_tRNA_synth"/>
    <property type="match status" value="1"/>
</dbReference>
<dbReference type="InterPro" id="IPR004364">
    <property type="entry name" value="Aa-tRNA-synt_II"/>
</dbReference>
<dbReference type="InterPro" id="IPR006195">
    <property type="entry name" value="aa-tRNA-synth_II"/>
</dbReference>
<dbReference type="InterPro" id="IPR045864">
    <property type="entry name" value="aa-tRNA-synth_II/BPL/LPL"/>
</dbReference>
<dbReference type="InterPro" id="IPR004522">
    <property type="entry name" value="Asn-tRNA-ligase"/>
</dbReference>
<dbReference type="InterPro" id="IPR002312">
    <property type="entry name" value="Asp/Asn-tRNA-synth_IIb"/>
</dbReference>
<dbReference type="InterPro" id="IPR012340">
    <property type="entry name" value="NA-bd_OB-fold"/>
</dbReference>
<dbReference type="InterPro" id="IPR004365">
    <property type="entry name" value="NA-bd_OB_tRNA"/>
</dbReference>
<dbReference type="NCBIfam" id="TIGR00457">
    <property type="entry name" value="asnS"/>
    <property type="match status" value="1"/>
</dbReference>
<dbReference type="NCBIfam" id="NF003037">
    <property type="entry name" value="PRK03932.1"/>
    <property type="match status" value="1"/>
</dbReference>
<dbReference type="NCBIfam" id="NF003483">
    <property type="entry name" value="PRK05159.1"/>
    <property type="match status" value="1"/>
</dbReference>
<dbReference type="PANTHER" id="PTHR22594:SF34">
    <property type="entry name" value="ASPARAGINE--TRNA LIGASE, MITOCHONDRIAL-RELATED"/>
    <property type="match status" value="1"/>
</dbReference>
<dbReference type="PANTHER" id="PTHR22594">
    <property type="entry name" value="ASPARTYL/LYSYL-TRNA SYNTHETASE"/>
    <property type="match status" value="1"/>
</dbReference>
<dbReference type="Pfam" id="PF00152">
    <property type="entry name" value="tRNA-synt_2"/>
    <property type="match status" value="1"/>
</dbReference>
<dbReference type="Pfam" id="PF01336">
    <property type="entry name" value="tRNA_anti-codon"/>
    <property type="match status" value="1"/>
</dbReference>
<dbReference type="PRINTS" id="PR01042">
    <property type="entry name" value="TRNASYNTHASP"/>
</dbReference>
<dbReference type="SUPFAM" id="SSF55681">
    <property type="entry name" value="Class II aaRS and biotin synthetases"/>
    <property type="match status" value="1"/>
</dbReference>
<dbReference type="SUPFAM" id="SSF50249">
    <property type="entry name" value="Nucleic acid-binding proteins"/>
    <property type="match status" value="1"/>
</dbReference>
<dbReference type="PROSITE" id="PS50862">
    <property type="entry name" value="AA_TRNA_LIGASE_II"/>
    <property type="match status" value="1"/>
</dbReference>
<sequence length="429" mass="49948">MLSIAEVSTKAYVGSKVSIRGWVYRIRSSGGVTFVVVRDSSGIIQCTARKNELPEDVYDTISSLGIESSVEFHGTLKEDRRSPSGYEIAVDSFRVYQKNDVFPITKDQGEEFLLDNRHLWLRSREFTSVLKIRSTIFRSFADFFYENGYYQVQTPFMVSTAVEGGSTLFKVDFFGEPIYLNQSAQFYLETMIYSLEKVFTIAPSFRAEKSRTRRHLTEYWHAEAEVAWIDNNEMMDIEERMIYYIVSRVTEDNEDELKMLNRDPEVLKAMKPPFPRIRYSEIIKVANSIGLPLKYGDDLGADEERQITMKYDRPIFVTNYPKDLKPFYMPVDPENPGEVLNHDMLAPEGYGEIIGGSQRIWNYDELMQRIREANLDESAYYWYVDLRKYGSVPHSGFGLGLDRLAMWIMHLDNIREAIPYPRTIRRTKP</sequence>
<gene>
    <name evidence="1" type="primary">asnS</name>
    <name type="ordered locus">Ta0519</name>
</gene>
<protein>
    <recommendedName>
        <fullName evidence="1">Asparagine--tRNA ligase</fullName>
        <ecNumber evidence="1">6.1.1.22</ecNumber>
    </recommendedName>
    <alternativeName>
        <fullName evidence="1">Asparaginyl-tRNA synthetase</fullName>
        <shortName evidence="1">AsnRS</shortName>
    </alternativeName>
</protein>
<proteinExistence type="inferred from homology"/>
<reference key="1">
    <citation type="journal article" date="2000" name="Nature">
        <title>The genome sequence of the thermoacidophilic scavenger Thermoplasma acidophilum.</title>
        <authorList>
            <person name="Ruepp A."/>
            <person name="Graml W."/>
            <person name="Santos-Martinez M.-L."/>
            <person name="Koretke K.K."/>
            <person name="Volker C."/>
            <person name="Mewes H.-W."/>
            <person name="Frishman D."/>
            <person name="Stocker S."/>
            <person name="Lupas A.N."/>
            <person name="Baumeister W."/>
        </authorList>
    </citation>
    <scope>NUCLEOTIDE SEQUENCE [LARGE SCALE GENOMIC DNA]</scope>
    <source>
        <strain>ATCC 25905 / DSM 1728 / JCM 9062 / NBRC 15155 / AMRC-C165</strain>
    </source>
</reference>
<accession>Q9HKS7</accession>
<feature type="chain" id="PRO_0000176489" description="Asparagine--tRNA ligase">
    <location>
        <begin position="1"/>
        <end position="429"/>
    </location>
</feature>
<comment type="catalytic activity">
    <reaction evidence="1">
        <text>tRNA(Asn) + L-asparagine + ATP = L-asparaginyl-tRNA(Asn) + AMP + diphosphate + H(+)</text>
        <dbReference type="Rhea" id="RHEA:11180"/>
        <dbReference type="Rhea" id="RHEA-COMP:9659"/>
        <dbReference type="Rhea" id="RHEA-COMP:9674"/>
        <dbReference type="ChEBI" id="CHEBI:15378"/>
        <dbReference type="ChEBI" id="CHEBI:30616"/>
        <dbReference type="ChEBI" id="CHEBI:33019"/>
        <dbReference type="ChEBI" id="CHEBI:58048"/>
        <dbReference type="ChEBI" id="CHEBI:78442"/>
        <dbReference type="ChEBI" id="CHEBI:78515"/>
        <dbReference type="ChEBI" id="CHEBI:456215"/>
        <dbReference type="EC" id="6.1.1.22"/>
    </reaction>
</comment>
<comment type="subcellular location">
    <subcellularLocation>
        <location>Cytoplasm</location>
    </subcellularLocation>
</comment>
<comment type="similarity">
    <text evidence="1">Belongs to the class-II aminoacyl-tRNA synthetase family.</text>
</comment>